<protein>
    <recommendedName>
        <fullName evidence="1">Holliday junction branch migration complex subunit RuvB</fullName>
        <ecNumber evidence="1">3.6.4.-</ecNumber>
    </recommendedName>
</protein>
<dbReference type="EC" id="3.6.4.-" evidence="1"/>
<dbReference type="EMBL" id="CP000108">
    <property type="protein sequence ID" value="ABB29018.1"/>
    <property type="molecule type" value="Genomic_DNA"/>
</dbReference>
<dbReference type="SMR" id="Q3APQ7"/>
<dbReference type="STRING" id="340177.Cag_1767"/>
<dbReference type="KEGG" id="cch:Cag_1767"/>
<dbReference type="eggNOG" id="COG2255">
    <property type="taxonomic scope" value="Bacteria"/>
</dbReference>
<dbReference type="HOGENOM" id="CLU_055599_1_0_10"/>
<dbReference type="OrthoDB" id="9804478at2"/>
<dbReference type="GO" id="GO:0005737">
    <property type="term" value="C:cytoplasm"/>
    <property type="evidence" value="ECO:0007669"/>
    <property type="project" value="UniProtKB-SubCell"/>
</dbReference>
<dbReference type="GO" id="GO:0048476">
    <property type="term" value="C:Holliday junction resolvase complex"/>
    <property type="evidence" value="ECO:0007669"/>
    <property type="project" value="UniProtKB-UniRule"/>
</dbReference>
<dbReference type="GO" id="GO:0005524">
    <property type="term" value="F:ATP binding"/>
    <property type="evidence" value="ECO:0007669"/>
    <property type="project" value="UniProtKB-UniRule"/>
</dbReference>
<dbReference type="GO" id="GO:0016887">
    <property type="term" value="F:ATP hydrolysis activity"/>
    <property type="evidence" value="ECO:0007669"/>
    <property type="project" value="InterPro"/>
</dbReference>
<dbReference type="GO" id="GO:0000400">
    <property type="term" value="F:four-way junction DNA binding"/>
    <property type="evidence" value="ECO:0007669"/>
    <property type="project" value="UniProtKB-UniRule"/>
</dbReference>
<dbReference type="GO" id="GO:0009378">
    <property type="term" value="F:four-way junction helicase activity"/>
    <property type="evidence" value="ECO:0007669"/>
    <property type="project" value="InterPro"/>
</dbReference>
<dbReference type="GO" id="GO:0006310">
    <property type="term" value="P:DNA recombination"/>
    <property type="evidence" value="ECO:0007669"/>
    <property type="project" value="UniProtKB-UniRule"/>
</dbReference>
<dbReference type="GO" id="GO:0006281">
    <property type="term" value="P:DNA repair"/>
    <property type="evidence" value="ECO:0007669"/>
    <property type="project" value="UniProtKB-UniRule"/>
</dbReference>
<dbReference type="CDD" id="cd00009">
    <property type="entry name" value="AAA"/>
    <property type="match status" value="1"/>
</dbReference>
<dbReference type="Gene3D" id="1.10.8.60">
    <property type="match status" value="1"/>
</dbReference>
<dbReference type="Gene3D" id="3.40.50.300">
    <property type="entry name" value="P-loop containing nucleotide triphosphate hydrolases"/>
    <property type="match status" value="1"/>
</dbReference>
<dbReference type="Gene3D" id="1.10.10.10">
    <property type="entry name" value="Winged helix-like DNA-binding domain superfamily/Winged helix DNA-binding domain"/>
    <property type="match status" value="1"/>
</dbReference>
<dbReference type="HAMAP" id="MF_00016">
    <property type="entry name" value="DNA_HJ_migration_RuvB"/>
    <property type="match status" value="1"/>
</dbReference>
<dbReference type="InterPro" id="IPR003593">
    <property type="entry name" value="AAA+_ATPase"/>
</dbReference>
<dbReference type="InterPro" id="IPR041445">
    <property type="entry name" value="AAA_lid_4"/>
</dbReference>
<dbReference type="InterPro" id="IPR004605">
    <property type="entry name" value="DNA_helicase_Holl-junc_RuvB"/>
</dbReference>
<dbReference type="InterPro" id="IPR027417">
    <property type="entry name" value="P-loop_NTPase"/>
</dbReference>
<dbReference type="InterPro" id="IPR008824">
    <property type="entry name" value="RuvB-like_N"/>
</dbReference>
<dbReference type="InterPro" id="IPR008823">
    <property type="entry name" value="RuvB_C"/>
</dbReference>
<dbReference type="InterPro" id="IPR036388">
    <property type="entry name" value="WH-like_DNA-bd_sf"/>
</dbReference>
<dbReference type="InterPro" id="IPR036390">
    <property type="entry name" value="WH_DNA-bd_sf"/>
</dbReference>
<dbReference type="NCBIfam" id="NF000868">
    <property type="entry name" value="PRK00080.1"/>
    <property type="match status" value="1"/>
</dbReference>
<dbReference type="NCBIfam" id="TIGR00635">
    <property type="entry name" value="ruvB"/>
    <property type="match status" value="1"/>
</dbReference>
<dbReference type="PANTHER" id="PTHR42848">
    <property type="match status" value="1"/>
</dbReference>
<dbReference type="PANTHER" id="PTHR42848:SF1">
    <property type="entry name" value="HOLLIDAY JUNCTION BRANCH MIGRATION COMPLEX SUBUNIT RUVB"/>
    <property type="match status" value="1"/>
</dbReference>
<dbReference type="Pfam" id="PF17864">
    <property type="entry name" value="AAA_lid_4"/>
    <property type="match status" value="1"/>
</dbReference>
<dbReference type="Pfam" id="PF05491">
    <property type="entry name" value="RuvB_C"/>
    <property type="match status" value="1"/>
</dbReference>
<dbReference type="Pfam" id="PF05496">
    <property type="entry name" value="RuvB_N"/>
    <property type="match status" value="1"/>
</dbReference>
<dbReference type="SMART" id="SM00382">
    <property type="entry name" value="AAA"/>
    <property type="match status" value="1"/>
</dbReference>
<dbReference type="SUPFAM" id="SSF52540">
    <property type="entry name" value="P-loop containing nucleoside triphosphate hydrolases"/>
    <property type="match status" value="1"/>
</dbReference>
<dbReference type="SUPFAM" id="SSF46785">
    <property type="entry name" value="Winged helix' DNA-binding domain"/>
    <property type="match status" value="1"/>
</dbReference>
<organism>
    <name type="scientific">Chlorobium chlorochromatii (strain CaD3)</name>
    <dbReference type="NCBI Taxonomy" id="340177"/>
    <lineage>
        <taxon>Bacteria</taxon>
        <taxon>Pseudomonadati</taxon>
        <taxon>Chlorobiota</taxon>
        <taxon>Chlorobiia</taxon>
        <taxon>Chlorobiales</taxon>
        <taxon>Chlorobiaceae</taxon>
        <taxon>Chlorobium/Pelodictyon group</taxon>
        <taxon>Chlorobium</taxon>
    </lineage>
</organism>
<proteinExistence type="inferred from homology"/>
<sequence>MRIELLNTPPDAAESRFEEQIRPIRMEDFAGQQRLTDNLKVFISAAKMRGDALDHVLLSGPPGLGKTTLAYIIASEMGSSIKATSGPLLDKAGNLAGLLTGLQKGDILFIDEIHRMPPMVEEYLYSAMEDFRIDIMLDSGPSARAVQLRIEPFTLVGATTRSGLLTSPLRARFGINSRFDYYEPELLTRIIIRASSILGIGIEPDAAAEIAGRSRGTPRIANRLLRRARDFAQVDGISTITRTIAMKTLECLEIDEEGLDEMDKKIMDTIVNKFSGGPVGIASLAVSVGEERDTIEEVYEPYLIQAGYLARTTRGRVATRKAFSRFADHTLLGGNFGGHKGSLPLFDESEAD</sequence>
<keyword id="KW-0067">ATP-binding</keyword>
<keyword id="KW-0963">Cytoplasm</keyword>
<keyword id="KW-0227">DNA damage</keyword>
<keyword id="KW-0233">DNA recombination</keyword>
<keyword id="KW-0234">DNA repair</keyword>
<keyword id="KW-0238">DNA-binding</keyword>
<keyword id="KW-0378">Hydrolase</keyword>
<keyword id="KW-0547">Nucleotide-binding</keyword>
<comment type="function">
    <text evidence="1">The RuvA-RuvB-RuvC complex processes Holliday junction (HJ) DNA during genetic recombination and DNA repair, while the RuvA-RuvB complex plays an important role in the rescue of blocked DNA replication forks via replication fork reversal (RFR). RuvA specifically binds to HJ cruciform DNA, conferring on it an open structure. The RuvB hexamer acts as an ATP-dependent pump, pulling dsDNA into and through the RuvAB complex. RuvB forms 2 homohexamers on either side of HJ DNA bound by 1 or 2 RuvA tetramers; 4 subunits per hexamer contact DNA at a time. Coordinated motions by a converter formed by DNA-disengaged RuvB subunits stimulates ATP hydrolysis and nucleotide exchange. Immobilization of the converter enables RuvB to convert the ATP-contained energy into a lever motion, pulling 2 nucleotides of DNA out of the RuvA tetramer per ATP hydrolyzed, thus driving DNA branch migration. The RuvB motors rotate together with the DNA substrate, which together with the progressing nucleotide cycle form the mechanistic basis for DNA recombination by continuous HJ branch migration. Branch migration allows RuvC to scan DNA until it finds its consensus sequence, where it cleaves and resolves cruciform DNA.</text>
</comment>
<comment type="catalytic activity">
    <reaction evidence="1">
        <text>ATP + H2O = ADP + phosphate + H(+)</text>
        <dbReference type="Rhea" id="RHEA:13065"/>
        <dbReference type="ChEBI" id="CHEBI:15377"/>
        <dbReference type="ChEBI" id="CHEBI:15378"/>
        <dbReference type="ChEBI" id="CHEBI:30616"/>
        <dbReference type="ChEBI" id="CHEBI:43474"/>
        <dbReference type="ChEBI" id="CHEBI:456216"/>
    </reaction>
</comment>
<comment type="subunit">
    <text evidence="1">Homohexamer. Forms an RuvA(8)-RuvB(12)-Holliday junction (HJ) complex. HJ DNA is sandwiched between 2 RuvA tetramers; dsDNA enters through RuvA and exits via RuvB. An RuvB hexamer assembles on each DNA strand where it exits the tetramer. Each RuvB hexamer is contacted by two RuvA subunits (via domain III) on 2 adjacent RuvB subunits; this complex drives branch migration. In the full resolvosome a probable DNA-RuvA(4)-RuvB(12)-RuvC(2) complex forms which resolves the HJ.</text>
</comment>
<comment type="subcellular location">
    <subcellularLocation>
        <location evidence="1">Cytoplasm</location>
    </subcellularLocation>
</comment>
<comment type="domain">
    <text evidence="1">Has 3 domains, the large (RuvB-L) and small ATPase (RuvB-S) domains and the C-terminal head (RuvB-H) domain. The head domain binds DNA, while the ATPase domains jointly bind ATP, ADP or are empty depending on the state of the subunit in the translocation cycle. During a single DNA translocation step the structure of each domain remains the same, but their relative positions change.</text>
</comment>
<comment type="similarity">
    <text evidence="1">Belongs to the RuvB family.</text>
</comment>
<accession>Q3APQ7</accession>
<reference key="1">
    <citation type="submission" date="2005-08" db="EMBL/GenBank/DDBJ databases">
        <title>Complete sequence of Chlorobium chlorochromatii CaD3.</title>
        <authorList>
            <consortium name="US DOE Joint Genome Institute"/>
            <person name="Copeland A."/>
            <person name="Lucas S."/>
            <person name="Lapidus A."/>
            <person name="Barry K."/>
            <person name="Detter J.C."/>
            <person name="Glavina T."/>
            <person name="Hammon N."/>
            <person name="Israni S."/>
            <person name="Pitluck S."/>
            <person name="Bryant D."/>
            <person name="Schmutz J."/>
            <person name="Larimer F."/>
            <person name="Land M."/>
            <person name="Kyrpides N."/>
            <person name="Ivanova N."/>
            <person name="Richardson P."/>
        </authorList>
    </citation>
    <scope>NUCLEOTIDE SEQUENCE [LARGE SCALE GENOMIC DNA]</scope>
    <source>
        <strain>CaD3</strain>
    </source>
</reference>
<name>RUVB_CHLCH</name>
<gene>
    <name evidence="1" type="primary">ruvB</name>
    <name type="ordered locus">Cag_1767</name>
</gene>
<evidence type="ECO:0000255" key="1">
    <source>
        <dbReference type="HAMAP-Rule" id="MF_00016"/>
    </source>
</evidence>
<feature type="chain" id="PRO_0000235359" description="Holliday junction branch migration complex subunit RuvB">
    <location>
        <begin position="1"/>
        <end position="352"/>
    </location>
</feature>
<feature type="region of interest" description="Large ATPase domain (RuvB-L)" evidence="1">
    <location>
        <begin position="1"/>
        <end position="182"/>
    </location>
</feature>
<feature type="region of interest" description="Small ATPAse domain (RuvB-S)" evidence="1">
    <location>
        <begin position="183"/>
        <end position="253"/>
    </location>
</feature>
<feature type="region of interest" description="Head domain (RuvB-H)" evidence="1">
    <location>
        <begin position="256"/>
        <end position="352"/>
    </location>
</feature>
<feature type="binding site" evidence="1">
    <location>
        <position position="21"/>
    </location>
    <ligand>
        <name>ATP</name>
        <dbReference type="ChEBI" id="CHEBI:30616"/>
    </ligand>
</feature>
<feature type="binding site" evidence="1">
    <location>
        <position position="22"/>
    </location>
    <ligand>
        <name>ATP</name>
        <dbReference type="ChEBI" id="CHEBI:30616"/>
    </ligand>
</feature>
<feature type="binding site" evidence="1">
    <location>
        <position position="63"/>
    </location>
    <ligand>
        <name>ATP</name>
        <dbReference type="ChEBI" id="CHEBI:30616"/>
    </ligand>
</feature>
<feature type="binding site" evidence="1">
    <location>
        <position position="66"/>
    </location>
    <ligand>
        <name>ATP</name>
        <dbReference type="ChEBI" id="CHEBI:30616"/>
    </ligand>
</feature>
<feature type="binding site" evidence="1">
    <location>
        <position position="67"/>
    </location>
    <ligand>
        <name>ATP</name>
        <dbReference type="ChEBI" id="CHEBI:30616"/>
    </ligand>
</feature>
<feature type="binding site" evidence="1">
    <location>
        <position position="67"/>
    </location>
    <ligand>
        <name>Mg(2+)</name>
        <dbReference type="ChEBI" id="CHEBI:18420"/>
    </ligand>
</feature>
<feature type="binding site" evidence="1">
    <location>
        <position position="68"/>
    </location>
    <ligand>
        <name>ATP</name>
        <dbReference type="ChEBI" id="CHEBI:30616"/>
    </ligand>
</feature>
<feature type="binding site" evidence="1">
    <location>
        <begin position="129"/>
        <end position="131"/>
    </location>
    <ligand>
        <name>ATP</name>
        <dbReference type="ChEBI" id="CHEBI:30616"/>
    </ligand>
</feature>
<feature type="binding site" evidence="1">
    <location>
        <position position="172"/>
    </location>
    <ligand>
        <name>ATP</name>
        <dbReference type="ChEBI" id="CHEBI:30616"/>
    </ligand>
</feature>
<feature type="binding site" evidence="1">
    <location>
        <position position="182"/>
    </location>
    <ligand>
        <name>ATP</name>
        <dbReference type="ChEBI" id="CHEBI:30616"/>
    </ligand>
</feature>
<feature type="binding site" evidence="1">
    <location>
        <position position="219"/>
    </location>
    <ligand>
        <name>ATP</name>
        <dbReference type="ChEBI" id="CHEBI:30616"/>
    </ligand>
</feature>
<feature type="binding site" evidence="1">
    <location>
        <position position="292"/>
    </location>
    <ligand>
        <name>DNA</name>
        <dbReference type="ChEBI" id="CHEBI:16991"/>
    </ligand>
</feature>
<feature type="binding site" evidence="1">
    <location>
        <position position="311"/>
    </location>
    <ligand>
        <name>DNA</name>
        <dbReference type="ChEBI" id="CHEBI:16991"/>
    </ligand>
</feature>
<feature type="binding site" evidence="1">
    <location>
        <position position="316"/>
    </location>
    <ligand>
        <name>DNA</name>
        <dbReference type="ChEBI" id="CHEBI:16991"/>
    </ligand>
</feature>